<evidence type="ECO:0000250" key="1">
    <source>
        <dbReference type="UniProtKB" id="P57789"/>
    </source>
</evidence>
<evidence type="ECO:0000250" key="2">
    <source>
        <dbReference type="UniProtKB" id="Q9HB15"/>
    </source>
</evidence>
<evidence type="ECO:0000255" key="3"/>
<evidence type="ECO:0000269" key="4">
    <source>
    </source>
</evidence>
<evidence type="ECO:0000303" key="5">
    <source>
    </source>
</evidence>
<evidence type="ECO:0000305" key="6"/>
<feature type="chain" id="PRO_0000101761" description="Potassium channel subfamily K member 12">
    <location>
        <begin position="1"/>
        <end position="430"/>
    </location>
</feature>
<feature type="topological domain" description="Cytoplasmic" evidence="3">
    <location>
        <begin position="1"/>
        <end position="38"/>
    </location>
</feature>
<feature type="transmembrane region" description="Helical" evidence="3">
    <location>
        <begin position="39"/>
        <end position="59"/>
    </location>
</feature>
<feature type="intramembrane region" description="Pore-forming; Name=Pore-forming 1" evidence="3">
    <location>
        <begin position="114"/>
        <end position="134"/>
    </location>
</feature>
<feature type="transmembrane region" description="Helical" evidence="3">
    <location>
        <begin position="145"/>
        <end position="165"/>
    </location>
</feature>
<feature type="topological domain" description="Cytoplasmic" evidence="3">
    <location>
        <begin position="166"/>
        <end position="212"/>
    </location>
</feature>
<feature type="transmembrane region" description="Helical" evidence="3">
    <location>
        <begin position="213"/>
        <end position="233"/>
    </location>
</feature>
<feature type="intramembrane region" description="Pore-forming; Name=Pore-forming 2" evidence="3">
    <location>
        <begin position="243"/>
        <end position="263"/>
    </location>
</feature>
<feature type="transmembrane region" description="Helical" evidence="3">
    <location>
        <begin position="282"/>
        <end position="302"/>
    </location>
</feature>
<feature type="topological domain" description="Cytoplasmic" evidence="3">
    <location>
        <begin position="303"/>
        <end position="430"/>
    </location>
</feature>
<feature type="region of interest" description="ER retention/retrieval signal" evidence="2">
    <location>
        <begin position="11"/>
        <end position="16"/>
    </location>
</feature>
<feature type="region of interest" description="Selectivity filter 1" evidence="1">
    <location>
        <begin position="129"/>
        <end position="134"/>
    </location>
</feature>
<feature type="region of interest" description="Selectivity filter 2" evidence="1">
    <location>
        <begin position="256"/>
        <end position="261"/>
    </location>
</feature>
<feature type="binding site" evidence="1">
    <location>
        <position position="129"/>
    </location>
    <ligand>
        <name>K(+)</name>
        <dbReference type="ChEBI" id="CHEBI:29103"/>
        <label>1</label>
    </ligand>
</feature>
<feature type="binding site" evidence="1">
    <location>
        <position position="129"/>
    </location>
    <ligand>
        <name>K(+)</name>
        <dbReference type="ChEBI" id="CHEBI:29103"/>
        <label>4</label>
    </ligand>
</feature>
<feature type="binding site" evidence="1">
    <location>
        <position position="130"/>
    </location>
    <ligand>
        <name>K(+)</name>
        <dbReference type="ChEBI" id="CHEBI:29103"/>
        <label>1</label>
    </ligand>
</feature>
<feature type="binding site" evidence="1">
    <location>
        <position position="130"/>
    </location>
    <ligand>
        <name>K(+)</name>
        <dbReference type="ChEBI" id="CHEBI:29103"/>
        <label>2</label>
    </ligand>
</feature>
<feature type="binding site" evidence="1">
    <location>
        <position position="131"/>
    </location>
    <ligand>
        <name>K(+)</name>
        <dbReference type="ChEBI" id="CHEBI:29103"/>
        <label>2</label>
    </ligand>
</feature>
<feature type="binding site" evidence="1">
    <location>
        <position position="131"/>
    </location>
    <ligand>
        <name>K(+)</name>
        <dbReference type="ChEBI" id="CHEBI:29103"/>
        <label>3</label>
    </ligand>
</feature>
<feature type="binding site" evidence="1">
    <location>
        <position position="256"/>
    </location>
    <ligand>
        <name>K(+)</name>
        <dbReference type="ChEBI" id="CHEBI:29103"/>
        <label>1</label>
    </ligand>
</feature>
<feature type="binding site" evidence="1">
    <location>
        <position position="256"/>
    </location>
    <ligand>
        <name>K(+)</name>
        <dbReference type="ChEBI" id="CHEBI:29103"/>
        <label>4</label>
    </ligand>
</feature>
<feature type="binding site" evidence="1">
    <location>
        <position position="257"/>
    </location>
    <ligand>
        <name>K(+)</name>
        <dbReference type="ChEBI" id="CHEBI:29103"/>
        <label>1</label>
    </ligand>
</feature>
<feature type="binding site" evidence="1">
    <location>
        <position position="257"/>
    </location>
    <ligand>
        <name>K(+)</name>
        <dbReference type="ChEBI" id="CHEBI:29103"/>
        <label>2</label>
    </ligand>
</feature>
<feature type="binding site" evidence="1">
    <location>
        <position position="258"/>
    </location>
    <ligand>
        <name>K(+)</name>
        <dbReference type="ChEBI" id="CHEBI:29103"/>
        <label>2</label>
    </ligand>
</feature>
<feature type="binding site" evidence="1">
    <location>
        <position position="258"/>
    </location>
    <ligand>
        <name>K(+)</name>
        <dbReference type="ChEBI" id="CHEBI:29103"/>
        <label>3</label>
    </ligand>
</feature>
<feature type="binding site" evidence="1">
    <location>
        <position position="259"/>
    </location>
    <ligand>
        <name>K(+)</name>
        <dbReference type="ChEBI" id="CHEBI:29103"/>
        <label>3</label>
    </ligand>
</feature>
<feature type="glycosylation site" description="N-linked (GlcNAc...) asparagine" evidence="3">
    <location>
        <position position="78"/>
    </location>
</feature>
<organism>
    <name type="scientific">Rattus norvegicus</name>
    <name type="common">Rat</name>
    <dbReference type="NCBI Taxonomy" id="10116"/>
    <lineage>
        <taxon>Eukaryota</taxon>
        <taxon>Metazoa</taxon>
        <taxon>Chordata</taxon>
        <taxon>Craniata</taxon>
        <taxon>Vertebrata</taxon>
        <taxon>Euteleostomi</taxon>
        <taxon>Mammalia</taxon>
        <taxon>Eutheria</taxon>
        <taxon>Euarchontoglires</taxon>
        <taxon>Glires</taxon>
        <taxon>Rodentia</taxon>
        <taxon>Myomorpha</taxon>
        <taxon>Muroidea</taxon>
        <taxon>Muridae</taxon>
        <taxon>Murinae</taxon>
        <taxon>Rattus</taxon>
    </lineage>
</organism>
<protein>
    <recommendedName>
        <fullName>Potassium channel subfamily K member 12</fullName>
    </recommendedName>
    <alternativeName>
        <fullName evidence="5">Tandem pore domain halothane-inhibited potassium channel 2</fullName>
        <shortName evidence="5">THIK-2</shortName>
    </alternativeName>
</protein>
<sequence>MSSRSPRPPPRRCRRRLPRPSCCCCCCRRSHLNEDTGRFVLLAALIGLYLVAGATVFSALESPGEAEARARWGATLRNFSAAHGVAEPELRAFLRHYEAALAAGVRADALRPRWDFPGAFYFVGTVVSTIGFGMTTPATVGGKAFLIAYGLFGCAGTILFFNLFLERIISLLAFIMRACRERQLRRSGLLPATFRRGSALSEADSLAGWKPSVYHVLLILGLFAVLLACCASAMYTSVEGWDYVDSLYFCFVTFSTIGFGDLVSSQHAAYRNQGLYRLGNFLFILLGVCCIYSLFNVISILIKQVLNWMLRKLSCRCCTRCCPAPGAPLSRRNAITPGSRLRRRLAALGTDPAARDSDAEGRRLSGELISMRDLTASNKVSLALLQKQLSETANGYPRSVCVNTRQNGFSGGVGALGIMNNRLAETSASR</sequence>
<comment type="function">
    <text evidence="2">K(+) channel subunit that may homo- and heterodimerize to form functional channels with distinct regulatory and gating properties. Can heterodimerize with KCNK13 subunit to conduct K(+) outward rectifying currents at the plasma membrane. The homodimers are mainly retained in the endoplasmic reticulum compartment and may be targeted to the cell surface upon phosphorylation or other activation signals yet to be elucidated.</text>
</comment>
<comment type="catalytic activity">
    <reaction evidence="2">
        <text>K(+)(in) = K(+)(out)</text>
        <dbReference type="Rhea" id="RHEA:29463"/>
        <dbReference type="ChEBI" id="CHEBI:29103"/>
    </reaction>
</comment>
<comment type="subunit">
    <text evidence="2">Homodimer. Heterodimer with KCNK13.</text>
</comment>
<comment type="subcellular location">
    <subcellularLocation>
        <location evidence="2">Cell membrane</location>
        <topology evidence="3">Multi-pass membrane protein</topology>
    </subcellularLocation>
    <subcellularLocation>
        <location evidence="2">Endoplasmic reticulum membrane</location>
        <topology evidence="3">Multi-pass membrane protein</topology>
    </subcellularLocation>
</comment>
<comment type="tissue specificity">
    <text evidence="4">Highly expressed in most brain regions. Also expressed in other tissues such as lung, kidney, liver, stomach and spleen.</text>
</comment>
<comment type="domain">
    <text evidence="1">Each subunit contributes two pore-forming domains 1 and 2 which assemble to form a single pore with M2 and M4 transmembrane helices lining the central cavity and M1 and M3 facing the lipid bilayer. The transmembrane helices are bridged by the selectivity filters 1 and 2 that coordinate the permeant ions. Up to four ions can simultaneously occupy the selectivity filter and at least two elementary charges must translocate across the filter to convert it into the open conformation.</text>
</comment>
<comment type="similarity">
    <text evidence="6">Belongs to the two pore domain potassium channel (TC 1.A.1.8) family.</text>
</comment>
<dbReference type="EMBL" id="AF287300">
    <property type="protein sequence ID" value="AAG32311.1"/>
    <property type="molecule type" value="mRNA"/>
</dbReference>
<dbReference type="RefSeq" id="NP_071628.1">
    <property type="nucleotide sequence ID" value="NM_022292.2"/>
</dbReference>
<dbReference type="SMR" id="Q9ERS1"/>
<dbReference type="FunCoup" id="Q9ERS1">
    <property type="interactions" value="57"/>
</dbReference>
<dbReference type="STRING" id="10116.ENSRNOP00000021570"/>
<dbReference type="GlyCosmos" id="Q9ERS1">
    <property type="glycosylation" value="1 site, No reported glycans"/>
</dbReference>
<dbReference type="GlyGen" id="Q9ERS1">
    <property type="glycosylation" value="2 sites"/>
</dbReference>
<dbReference type="PhosphoSitePlus" id="Q9ERS1"/>
<dbReference type="PaxDb" id="10116-ENSRNOP00000021570"/>
<dbReference type="ABCD" id="Q9ERS1">
    <property type="antibodies" value="1 sequenced antibody"/>
</dbReference>
<dbReference type="Ensembl" id="ENSRNOT00000021570.3">
    <property type="protein sequence ID" value="ENSRNOP00000021570.1"/>
    <property type="gene ID" value="ENSRNOG00000016110.3"/>
</dbReference>
<dbReference type="GeneID" id="64119"/>
<dbReference type="KEGG" id="rno:64119"/>
<dbReference type="UCSC" id="RGD:68940">
    <property type="organism name" value="rat"/>
</dbReference>
<dbReference type="AGR" id="RGD:68940"/>
<dbReference type="CTD" id="56660"/>
<dbReference type="RGD" id="68940">
    <property type="gene designation" value="Kcnk12"/>
</dbReference>
<dbReference type="eggNOG" id="KOG4404">
    <property type="taxonomic scope" value="Eukaryota"/>
</dbReference>
<dbReference type="GeneTree" id="ENSGT00940000161424"/>
<dbReference type="HOGENOM" id="CLU_022504_3_1_1"/>
<dbReference type="InParanoid" id="Q9ERS1"/>
<dbReference type="PhylomeDB" id="Q9ERS1"/>
<dbReference type="TreeFam" id="TF313947"/>
<dbReference type="Reactome" id="R-RNO-5576886">
    <property type="pathway name" value="Phase 4 - resting membrane potential"/>
</dbReference>
<dbReference type="PRO" id="PR:Q9ERS1"/>
<dbReference type="Proteomes" id="UP000002494">
    <property type="component" value="Chromosome 6"/>
</dbReference>
<dbReference type="Bgee" id="ENSRNOG00000016110">
    <property type="expression patterns" value="Expressed in testis and 7 other cell types or tissues"/>
</dbReference>
<dbReference type="GO" id="GO:0005789">
    <property type="term" value="C:endoplasmic reticulum membrane"/>
    <property type="evidence" value="ECO:0000250"/>
    <property type="project" value="UniProtKB"/>
</dbReference>
<dbReference type="GO" id="GO:0034702">
    <property type="term" value="C:monoatomic ion channel complex"/>
    <property type="evidence" value="ECO:0007669"/>
    <property type="project" value="UniProtKB-KW"/>
</dbReference>
<dbReference type="GO" id="GO:0005886">
    <property type="term" value="C:plasma membrane"/>
    <property type="evidence" value="ECO:0000250"/>
    <property type="project" value="UniProtKB"/>
</dbReference>
<dbReference type="GO" id="GO:0042802">
    <property type="term" value="F:identical protein binding"/>
    <property type="evidence" value="ECO:0000250"/>
    <property type="project" value="UniProtKB"/>
</dbReference>
<dbReference type="GO" id="GO:0046872">
    <property type="term" value="F:metal ion binding"/>
    <property type="evidence" value="ECO:0007669"/>
    <property type="project" value="UniProtKB-KW"/>
</dbReference>
<dbReference type="GO" id="GO:0015271">
    <property type="term" value="F:outward rectifier potassium channel activity"/>
    <property type="evidence" value="ECO:0000318"/>
    <property type="project" value="GO_Central"/>
</dbReference>
<dbReference type="GO" id="GO:0005267">
    <property type="term" value="F:potassium channel activity"/>
    <property type="evidence" value="ECO:0000266"/>
    <property type="project" value="RGD"/>
</dbReference>
<dbReference type="GO" id="GO:0022841">
    <property type="term" value="F:potassium ion leak channel activity"/>
    <property type="evidence" value="ECO:0000318"/>
    <property type="project" value="GO_Central"/>
</dbReference>
<dbReference type="GO" id="GO:0046982">
    <property type="term" value="F:protein heterodimerization activity"/>
    <property type="evidence" value="ECO:0000250"/>
    <property type="project" value="UniProtKB"/>
</dbReference>
<dbReference type="GO" id="GO:0071805">
    <property type="term" value="P:potassium ion transmembrane transport"/>
    <property type="evidence" value="ECO:0000318"/>
    <property type="project" value="GO_Central"/>
</dbReference>
<dbReference type="FunFam" id="1.10.287.70:FF:000070">
    <property type="entry name" value="Potassium channel, subfamily K, member 12 like"/>
    <property type="match status" value="1"/>
</dbReference>
<dbReference type="Gene3D" id="1.10.287.70">
    <property type="match status" value="1"/>
</dbReference>
<dbReference type="InterPro" id="IPR003280">
    <property type="entry name" value="2pore_dom_K_chnl"/>
</dbReference>
<dbReference type="InterPro" id="IPR005410">
    <property type="entry name" value="2pore_dom_K_chnl_THIK"/>
</dbReference>
<dbReference type="InterPro" id="IPR013099">
    <property type="entry name" value="K_chnl_dom"/>
</dbReference>
<dbReference type="PANTHER" id="PTHR11003:SF11">
    <property type="entry name" value="POTASSIUM CHANNEL SUBFAMILY K MEMBER 12"/>
    <property type="match status" value="1"/>
</dbReference>
<dbReference type="PANTHER" id="PTHR11003">
    <property type="entry name" value="POTASSIUM CHANNEL, SUBFAMILY K"/>
    <property type="match status" value="1"/>
</dbReference>
<dbReference type="Pfam" id="PF07885">
    <property type="entry name" value="Ion_trans_2"/>
    <property type="match status" value="2"/>
</dbReference>
<dbReference type="PRINTS" id="PR01333">
    <property type="entry name" value="2POREKCHANEL"/>
</dbReference>
<dbReference type="PRINTS" id="PR01588">
    <property type="entry name" value="THIKCHANNEL"/>
</dbReference>
<dbReference type="SUPFAM" id="SSF81324">
    <property type="entry name" value="Voltage-gated potassium channels"/>
    <property type="match status" value="2"/>
</dbReference>
<reference key="1">
    <citation type="journal article" date="2001" name="J. Biol. Chem.">
        <title>THIK-1 and THIK-2, a novel subfamily of tandem pore domain K+ channels.</title>
        <authorList>
            <person name="Rajan S."/>
            <person name="Wischmeyer E."/>
            <person name="Karschin C."/>
            <person name="Preisig-Mueller R."/>
            <person name="Grzeschik K.-H."/>
            <person name="Daut J."/>
            <person name="Karschin A."/>
            <person name="Derst C."/>
        </authorList>
    </citation>
    <scope>NUCLEOTIDE SEQUENCE [MRNA]</scope>
    <scope>TISSUE SPECIFICITY</scope>
    <source>
        <strain>Wistar</strain>
        <tissue>Brain</tissue>
    </source>
</reference>
<accession>Q9ERS1</accession>
<gene>
    <name type="primary">Kcnk12</name>
</gene>
<keyword id="KW-1003">Cell membrane</keyword>
<keyword id="KW-0256">Endoplasmic reticulum</keyword>
<keyword id="KW-0325">Glycoprotein</keyword>
<keyword id="KW-0407">Ion channel</keyword>
<keyword id="KW-0406">Ion transport</keyword>
<keyword id="KW-0472">Membrane</keyword>
<keyword id="KW-0479">Metal-binding</keyword>
<keyword id="KW-0630">Potassium</keyword>
<keyword id="KW-0631">Potassium channel</keyword>
<keyword id="KW-0633">Potassium transport</keyword>
<keyword id="KW-1185">Reference proteome</keyword>
<keyword id="KW-0812">Transmembrane</keyword>
<keyword id="KW-1133">Transmembrane helix</keyword>
<keyword id="KW-0813">Transport</keyword>
<keyword id="KW-0851">Voltage-gated channel</keyword>
<name>KCNKC_RAT</name>
<proteinExistence type="evidence at transcript level"/>